<comment type="function">
    <text evidence="3 4">Involved in the anomeric conversion of L-fucose. Catalyzes also the interconversion of beta-pyran and beta-furan forms of D-ribose.</text>
</comment>
<comment type="catalytic activity">
    <reaction evidence="3 4">
        <text>alpha-L-fucose = beta-L-fucose</text>
        <dbReference type="Rhea" id="RHEA:25580"/>
        <dbReference type="ChEBI" id="CHEBI:42548"/>
        <dbReference type="ChEBI" id="CHEBI:42589"/>
        <dbReference type="EC" id="5.1.3.29"/>
    </reaction>
</comment>
<comment type="catalytic activity">
    <reaction evidence="3 4">
        <text>beta-D-ribopyranose = beta-D-ribofuranose</text>
        <dbReference type="Rhea" id="RHEA:25432"/>
        <dbReference type="ChEBI" id="CHEBI:27476"/>
        <dbReference type="ChEBI" id="CHEBI:47002"/>
        <dbReference type="EC" id="5.4.99.62"/>
    </reaction>
</comment>
<comment type="pathway">
    <text evidence="3 4">Carbohydrate metabolism; L-fucose metabolism.</text>
</comment>
<comment type="subunit">
    <text evidence="2 4">Homodecamer.</text>
</comment>
<comment type="subcellular location">
    <subcellularLocation>
        <location evidence="5">Cytoplasm</location>
    </subcellularLocation>
</comment>
<comment type="similarity">
    <text evidence="5">Belongs to the RbsD / FucU family. FucU mutarotase subfamily.</text>
</comment>
<protein>
    <recommendedName>
        <fullName>L-fucose mutarotase</fullName>
        <ecNumber evidence="3 4">5.1.3.29</ecNumber>
    </recommendedName>
    <alternativeName>
        <fullName>D-ribose pyranase</fullName>
        <ecNumber evidence="3 4">5.4.99.62</ecNumber>
    </alternativeName>
    <alternativeName>
        <fullName>Fucose 1-epimerase</fullName>
    </alternativeName>
    <alternativeName>
        <fullName>Type-2 mutarotase</fullName>
    </alternativeName>
</protein>
<organism>
    <name type="scientific">Escherichia coli (strain K12)</name>
    <dbReference type="NCBI Taxonomy" id="83333"/>
    <lineage>
        <taxon>Bacteria</taxon>
        <taxon>Pseudomonadati</taxon>
        <taxon>Pseudomonadota</taxon>
        <taxon>Gammaproteobacteria</taxon>
        <taxon>Enterobacterales</taxon>
        <taxon>Enterobacteriaceae</taxon>
        <taxon>Escherichia</taxon>
    </lineage>
</organism>
<feature type="chain" id="PRO_0000087380" description="L-fucose mutarotase">
    <location>
        <begin position="1"/>
        <end position="140"/>
    </location>
</feature>
<feature type="active site" description="Proton donor" evidence="4">
    <location>
        <position position="22"/>
    </location>
</feature>
<feature type="active site" evidence="4">
    <location>
        <position position="64"/>
    </location>
</feature>
<feature type="active site" evidence="4">
    <location>
        <position position="111"/>
    </location>
</feature>
<feature type="binding site" evidence="4">
    <location>
        <position position="30"/>
    </location>
    <ligand>
        <name>substrate</name>
    </ligand>
</feature>
<feature type="binding site" evidence="4">
    <location>
        <position position="73"/>
    </location>
    <ligand>
        <name>substrate</name>
    </ligand>
</feature>
<feature type="binding site" evidence="4">
    <location>
        <position position="111"/>
    </location>
    <ligand>
        <name>substrate</name>
    </ligand>
</feature>
<feature type="binding site" evidence="1">
    <location>
        <begin position="129"/>
        <end position="131"/>
    </location>
    <ligand>
        <name>substrate</name>
    </ligand>
</feature>
<feature type="binding site" evidence="4">
    <location>
        <position position="129"/>
    </location>
    <ligand>
        <name>substrate</name>
    </ligand>
</feature>
<feature type="binding site" evidence="4">
    <location>
        <position position="131"/>
    </location>
    <ligand>
        <name>substrate</name>
    </ligand>
</feature>
<feature type="mutagenesis site" description="Affects slightly binding affinity toward L-fucose. Significantly reduced ribose pyranase activity." evidence="4">
    <original>H</original>
    <variation>A</variation>
    <location>
        <position position="22"/>
    </location>
</feature>
<feature type="mutagenesis site" description="Affects slightly binding affinity toward L-fucose. Significantly reduced ribose pyranase activity." evidence="4">
    <original>D</original>
    <variation>A</variation>
    <location>
        <position position="64"/>
    </location>
</feature>
<feature type="mutagenesis site" description="Reduces binding affinity toward L-fucose. Significantly reduced ribose pyranase activity." evidence="4">
    <original>Y</original>
    <variation>F</variation>
    <location>
        <position position="111"/>
    </location>
</feature>
<feature type="sequence conflict" description="In Ref. 1; CAA33129." evidence="5" ref="1">
    <original>NRFAFYERAQKAFAIVITGERAKYGNILLKKGVTP</original>
    <variation>IVLRFMNGRKKPLRSLSQANERSTGIFF</variation>
    <location>
        <begin position="106"/>
        <end position="140"/>
    </location>
</feature>
<feature type="helix" evidence="7">
    <location>
        <begin position="11"/>
        <end position="19"/>
    </location>
</feature>
<feature type="strand" evidence="7">
    <location>
        <begin position="25"/>
        <end position="29"/>
    </location>
</feature>
<feature type="helix" evidence="7">
    <location>
        <begin position="35"/>
        <end position="38"/>
    </location>
</feature>
<feature type="strand" evidence="7">
    <location>
        <begin position="39"/>
        <end position="45"/>
    </location>
</feature>
<feature type="helix" evidence="7">
    <location>
        <begin position="50"/>
        <end position="57"/>
    </location>
</feature>
<feature type="turn" evidence="7">
    <location>
        <begin position="58"/>
        <end position="60"/>
    </location>
</feature>
<feature type="strand" evidence="7">
    <location>
        <begin position="65"/>
        <end position="67"/>
    </location>
</feature>
<feature type="strand" evidence="7">
    <location>
        <begin position="70"/>
        <end position="73"/>
    </location>
</feature>
<feature type="helix" evidence="7">
    <location>
        <begin position="83"/>
        <end position="92"/>
    </location>
</feature>
<feature type="strand" evidence="7">
    <location>
        <begin position="103"/>
        <end position="105"/>
    </location>
</feature>
<feature type="helix" evidence="7">
    <location>
        <begin position="107"/>
        <end position="114"/>
    </location>
</feature>
<feature type="strand" evidence="7">
    <location>
        <begin position="117"/>
        <end position="123"/>
    </location>
</feature>
<feature type="strand" evidence="7">
    <location>
        <begin position="132"/>
        <end position="136"/>
    </location>
</feature>
<name>FUCM_ECOLI</name>
<dbReference type="EC" id="5.1.3.29" evidence="3 4"/>
<dbReference type="EC" id="5.4.99.62" evidence="3 4"/>
<dbReference type="EMBL" id="X15025">
    <property type="protein sequence ID" value="CAA33129.1"/>
    <property type="molecule type" value="Genomic_DNA"/>
</dbReference>
<dbReference type="EMBL" id="U29581">
    <property type="protein sequence ID" value="AAB40454.1"/>
    <property type="molecule type" value="Genomic_DNA"/>
</dbReference>
<dbReference type="EMBL" id="U00096">
    <property type="protein sequence ID" value="AAC75846.1"/>
    <property type="molecule type" value="Genomic_DNA"/>
</dbReference>
<dbReference type="EMBL" id="AP009048">
    <property type="protein sequence ID" value="BAE76876.1"/>
    <property type="molecule type" value="Genomic_DNA"/>
</dbReference>
<dbReference type="PIR" id="H65062">
    <property type="entry name" value="Q4ECKR"/>
</dbReference>
<dbReference type="RefSeq" id="NP_417284.1">
    <property type="nucleotide sequence ID" value="NC_000913.3"/>
</dbReference>
<dbReference type="RefSeq" id="WP_000920840.1">
    <property type="nucleotide sequence ID" value="NZ_STEB01000030.1"/>
</dbReference>
<dbReference type="PDB" id="2WCV">
    <property type="method" value="X-ray"/>
    <property type="resolution" value="1.90 A"/>
    <property type="chains" value="A/B/C/D/E/F/G/H/I/J=1-140"/>
</dbReference>
<dbReference type="PDBsum" id="2WCV"/>
<dbReference type="SMR" id="P0AEN8"/>
<dbReference type="BioGRID" id="4262305">
    <property type="interactions" value="18"/>
</dbReference>
<dbReference type="DIP" id="DIP-47990N"/>
<dbReference type="FunCoup" id="P0AEN8">
    <property type="interactions" value="204"/>
</dbReference>
<dbReference type="IntAct" id="P0AEN8">
    <property type="interactions" value="5"/>
</dbReference>
<dbReference type="STRING" id="511145.b2804"/>
<dbReference type="jPOST" id="P0AEN8"/>
<dbReference type="PaxDb" id="511145-b2804"/>
<dbReference type="EnsemblBacteria" id="AAC75846">
    <property type="protein sequence ID" value="AAC75846"/>
    <property type="gene ID" value="b2804"/>
</dbReference>
<dbReference type="GeneID" id="93779194"/>
<dbReference type="GeneID" id="945842"/>
<dbReference type="KEGG" id="ecj:JW2775"/>
<dbReference type="KEGG" id="eco:b2804"/>
<dbReference type="KEGG" id="ecoc:C3026_15415"/>
<dbReference type="PATRIC" id="fig|511145.12.peg.2904"/>
<dbReference type="EchoBASE" id="EB0350"/>
<dbReference type="eggNOG" id="COG4154">
    <property type="taxonomic scope" value="Bacteria"/>
</dbReference>
<dbReference type="HOGENOM" id="CLU_120075_1_0_6"/>
<dbReference type="InParanoid" id="P0AEN8"/>
<dbReference type="OMA" id="PVWDTYT"/>
<dbReference type="OrthoDB" id="7947972at2"/>
<dbReference type="PhylomeDB" id="P0AEN8"/>
<dbReference type="BioCyc" id="EcoCyc:EG10355-MONOMER"/>
<dbReference type="BioCyc" id="MetaCyc:EG10355-MONOMER"/>
<dbReference type="BRENDA" id="5.1.3.29">
    <property type="organism ID" value="2026"/>
</dbReference>
<dbReference type="BRENDA" id="5.4.99.62">
    <property type="organism ID" value="2026"/>
</dbReference>
<dbReference type="UniPathway" id="UPA00956"/>
<dbReference type="EvolutionaryTrace" id="P0AEN8"/>
<dbReference type="PRO" id="PR:P0AEN8"/>
<dbReference type="Proteomes" id="UP000000625">
    <property type="component" value="Chromosome"/>
</dbReference>
<dbReference type="GO" id="GO:0005737">
    <property type="term" value="C:cytoplasm"/>
    <property type="evidence" value="ECO:0000250"/>
    <property type="project" value="EcoCyc"/>
</dbReference>
<dbReference type="GO" id="GO:0062193">
    <property type="term" value="F:D-ribose pyranase activity"/>
    <property type="evidence" value="ECO:0007669"/>
    <property type="project" value="UniProtKB-EC"/>
</dbReference>
<dbReference type="GO" id="GO:0042806">
    <property type="term" value="F:fucose binding"/>
    <property type="evidence" value="ECO:0000314"/>
    <property type="project" value="MGI"/>
</dbReference>
<dbReference type="GO" id="GO:0042802">
    <property type="term" value="F:identical protein binding"/>
    <property type="evidence" value="ECO:0000314"/>
    <property type="project" value="EcoCyc"/>
</dbReference>
<dbReference type="GO" id="GO:0036373">
    <property type="term" value="F:L-fucose mutarotase activity"/>
    <property type="evidence" value="ECO:0000314"/>
    <property type="project" value="EcoCyc"/>
</dbReference>
<dbReference type="GO" id="GO:0016857">
    <property type="term" value="F:racemase and epimerase activity, acting on carbohydrates and derivatives"/>
    <property type="evidence" value="ECO:0000314"/>
    <property type="project" value="EcoCyc"/>
</dbReference>
<dbReference type="GO" id="GO:0006004">
    <property type="term" value="P:fucose metabolic process"/>
    <property type="evidence" value="ECO:0000318"/>
    <property type="project" value="GO_Central"/>
</dbReference>
<dbReference type="GO" id="GO:0036065">
    <property type="term" value="P:fucosylation"/>
    <property type="evidence" value="ECO:0000318"/>
    <property type="project" value="GO_Central"/>
</dbReference>
<dbReference type="GO" id="GO:0042354">
    <property type="term" value="P:L-fucose metabolic process"/>
    <property type="evidence" value="ECO:0007669"/>
    <property type="project" value="UniProtKB-UniRule"/>
</dbReference>
<dbReference type="FunFam" id="3.40.1650.10:FF:000001">
    <property type="entry name" value="L-fucose mutarotase"/>
    <property type="match status" value="1"/>
</dbReference>
<dbReference type="Gene3D" id="3.40.1650.10">
    <property type="entry name" value="RbsD-like domain"/>
    <property type="match status" value="1"/>
</dbReference>
<dbReference type="HAMAP" id="MF_01662">
    <property type="entry name" value="L_fucose_rotase"/>
    <property type="match status" value="1"/>
</dbReference>
<dbReference type="InterPro" id="IPR023751">
    <property type="entry name" value="L-fucose_mutarotase"/>
</dbReference>
<dbReference type="InterPro" id="IPR023750">
    <property type="entry name" value="RbsD-like_sf"/>
</dbReference>
<dbReference type="InterPro" id="IPR050443">
    <property type="entry name" value="RbsD/FucU_mutarotase"/>
</dbReference>
<dbReference type="InterPro" id="IPR007721">
    <property type="entry name" value="RbsD_FucU"/>
</dbReference>
<dbReference type="NCBIfam" id="NF011949">
    <property type="entry name" value="PRK15420.1"/>
    <property type="match status" value="1"/>
</dbReference>
<dbReference type="PANTHER" id="PTHR31690">
    <property type="entry name" value="FUCOSE MUTAROTASE"/>
    <property type="match status" value="1"/>
</dbReference>
<dbReference type="PANTHER" id="PTHR31690:SF4">
    <property type="entry name" value="FUCOSE MUTAROTASE"/>
    <property type="match status" value="1"/>
</dbReference>
<dbReference type="Pfam" id="PF05025">
    <property type="entry name" value="RbsD_FucU"/>
    <property type="match status" value="1"/>
</dbReference>
<dbReference type="SUPFAM" id="SSF102546">
    <property type="entry name" value="RbsD-like"/>
    <property type="match status" value="1"/>
</dbReference>
<sequence length="140" mass="15473">MLKTISPLISPELLKVLAEMGHGDEIIFSDAHFPAHSMGPQVIRADGLLVSDLLQAIIPLFELDSYAPPLVMMAAVEGDTLDPEVERRYRNALSLQAPCPDIIRINRFAFYERAQKAFAIVITGERAKYGNILLKKGVTP</sequence>
<proteinExistence type="evidence at protein level"/>
<keyword id="KW-0002">3D-structure</keyword>
<keyword id="KW-0119">Carbohydrate metabolism</keyword>
<keyword id="KW-0963">Cytoplasm</keyword>
<keyword id="KW-0294">Fucose metabolism</keyword>
<keyword id="KW-0413">Isomerase</keyword>
<keyword id="KW-1185">Reference proteome</keyword>
<gene>
    <name type="primary">fucU</name>
    <name type="ordered locus">b2804</name>
    <name type="ordered locus">JW2775</name>
</gene>
<reference key="1">
    <citation type="journal article" date="1989" name="Nucleic Acids Res.">
        <title>The nucleotide sequence of Escherichia coli genes for L-fucose dissimilation.</title>
        <authorList>
            <person name="Lu Z."/>
            <person name="Lin E.C.C."/>
        </authorList>
    </citation>
    <scope>NUCLEOTIDE SEQUENCE [GENOMIC DNA]</scope>
    <source>
        <strain>K12</strain>
    </source>
</reference>
<reference key="2">
    <citation type="journal article" date="1997" name="Science">
        <title>The complete genome sequence of Escherichia coli K-12.</title>
        <authorList>
            <person name="Blattner F.R."/>
            <person name="Plunkett G. III"/>
            <person name="Bloch C.A."/>
            <person name="Perna N.T."/>
            <person name="Burland V."/>
            <person name="Riley M."/>
            <person name="Collado-Vides J."/>
            <person name="Glasner J.D."/>
            <person name="Rode C.K."/>
            <person name="Mayhew G.F."/>
            <person name="Gregor J."/>
            <person name="Davis N.W."/>
            <person name="Kirkpatrick H.A."/>
            <person name="Goeden M.A."/>
            <person name="Rose D.J."/>
            <person name="Mau B."/>
            <person name="Shao Y."/>
        </authorList>
    </citation>
    <scope>NUCLEOTIDE SEQUENCE [LARGE SCALE GENOMIC DNA]</scope>
    <source>
        <strain>K12 / MG1655 / ATCC 47076</strain>
    </source>
</reference>
<reference key="3">
    <citation type="journal article" date="2006" name="Mol. Syst. Biol.">
        <title>Highly accurate genome sequences of Escherichia coli K-12 strains MG1655 and W3110.</title>
        <authorList>
            <person name="Hayashi K."/>
            <person name="Morooka N."/>
            <person name="Yamamoto Y."/>
            <person name="Fujita K."/>
            <person name="Isono K."/>
            <person name="Choi S."/>
            <person name="Ohtsubo E."/>
            <person name="Baba T."/>
            <person name="Wanner B.L."/>
            <person name="Mori H."/>
            <person name="Horiuchi T."/>
        </authorList>
    </citation>
    <scope>NUCLEOTIDE SEQUENCE [LARGE SCALE GENOMIC DNA]</scope>
    <source>
        <strain>K12 / W3110 / ATCC 27325 / DSM 5911</strain>
    </source>
</reference>
<reference key="4">
    <citation type="journal article" date="2003" name="J. Biol. Chem.">
        <title>Crystal structures of RbsD leading to the identification of cytoplasmic sugar-binding proteins with a novel folding architecture.</title>
        <authorList>
            <person name="Kim M.-S."/>
            <person name="Shin J."/>
            <person name="Lee W."/>
            <person name="Lee H.-S."/>
            <person name="Oh B.-H."/>
        </authorList>
    </citation>
    <scope>SUBUNIT</scope>
</reference>
<reference key="5">
    <citation type="journal article" date="2004" name="J. Biol. Chem.">
        <title>NMR application probes a novel and ubiquitous family of enzymes that alter monosaccharide configuration.</title>
        <authorList>
            <person name="Ryu K.-S."/>
            <person name="Kim C."/>
            <person name="Kim I."/>
            <person name="Yoo S."/>
            <person name="Choi B.-S."/>
            <person name="Park C."/>
        </authorList>
    </citation>
    <scope>CATALYTIC ACTIVITY</scope>
    <scope>FUNCTION</scope>
</reference>
<reference evidence="6" key="6">
    <citation type="journal article" date="2009" name="J. Mol. Biol.">
        <title>Crystal structures and enzyme mechanisms of a dual fucose mutarotase/ribose pyranase.</title>
        <authorList>
            <person name="Lee K.H."/>
            <person name="Ryu K.S."/>
            <person name="Kim M.S."/>
            <person name="Suh H.Y."/>
            <person name="Ku B."/>
            <person name="Song Y.L."/>
            <person name="Ko S."/>
            <person name="Lee W."/>
            <person name="Oh B.H."/>
        </authorList>
    </citation>
    <scope>X-RAY CRYSTALLOGRAPHY (1.90 ANGSTROMS) IN COMPLEX WITH L-FUCOSE</scope>
    <scope>SUBUNIT</scope>
    <scope>SUBSTRATE-BINDING SITES</scope>
    <scope>ACTIVE SITE</scope>
    <scope>MUTAGENESIS OF HIS-22; ASP-64 AND TYR-111</scope>
    <scope>CATALYTIC ACTIVITY</scope>
    <scope>FUNCTION</scope>
</reference>
<accession>P0AEN8</accession>
<accession>P11555</accession>
<accession>Q2MA30</accession>
<accession>Q46923</accession>
<evidence type="ECO:0000250" key="1"/>
<evidence type="ECO:0000269" key="2">
    <source>
    </source>
</evidence>
<evidence type="ECO:0000269" key="3">
    <source>
    </source>
</evidence>
<evidence type="ECO:0000269" key="4">
    <source>
    </source>
</evidence>
<evidence type="ECO:0000305" key="5"/>
<evidence type="ECO:0007744" key="6">
    <source>
        <dbReference type="PDB" id="2WCV"/>
    </source>
</evidence>
<evidence type="ECO:0007829" key="7">
    <source>
        <dbReference type="PDB" id="2WCV"/>
    </source>
</evidence>